<proteinExistence type="inferred from homology"/>
<accession>P21017</accession>
<keyword id="KW-0244">Early protein</keyword>
<keyword id="KW-1185">Reference proteome</keyword>
<gene>
    <name type="primary">OPG052</name>
    <name type="ORF">F8L</name>
</gene>
<feature type="chain" id="PRO_0000099487" description="Protein OPG052">
    <location>
        <begin position="1"/>
        <end position="65"/>
    </location>
</feature>
<feature type="region of interest" description="Disordered" evidence="2">
    <location>
        <begin position="1"/>
        <end position="29"/>
    </location>
</feature>
<feature type="compositionally biased region" description="Basic residues" evidence="2">
    <location>
        <begin position="1"/>
        <end position="10"/>
    </location>
</feature>
<feature type="compositionally biased region" description="Basic and acidic residues" evidence="2">
    <location>
        <begin position="11"/>
        <end position="21"/>
    </location>
</feature>
<organismHost>
    <name type="scientific">Homo sapiens</name>
    <name type="common">Human</name>
    <dbReference type="NCBI Taxonomy" id="9606"/>
</organismHost>
<sequence>MEGSKRKHDSRRPQQEQEQPRPRTPPSYEEIAKYGHSFNVKRFTNEEMCLKNDYPRIISYNPPPK</sequence>
<protein>
    <recommendedName>
        <fullName>Protein OPG052</fullName>
    </recommendedName>
    <alternativeName>
        <fullName>Protein F8</fullName>
    </alternativeName>
</protein>
<reference key="1">
    <citation type="journal article" date="1990" name="Virology">
        <title>The complete DNA sequence of vaccinia virus.</title>
        <authorList>
            <person name="Goebel S.J."/>
            <person name="Johnson G.P."/>
            <person name="Perkus M.E."/>
            <person name="Davis S.W."/>
            <person name="Winslow J.P."/>
            <person name="Paoletti E."/>
        </authorList>
    </citation>
    <scope>NUCLEOTIDE SEQUENCE [LARGE SCALE GENOMIC DNA]</scope>
</reference>
<reference key="2">
    <citation type="journal article" date="1990" name="Virology">
        <title>Appendix to 'The complete DNA sequence of vaccinia virus'.</title>
        <authorList>
            <person name="Goebel S.J."/>
            <person name="Johnson G.P."/>
            <person name="Perkus M.E."/>
            <person name="Davis S.W."/>
            <person name="Winslow J.P."/>
            <person name="Paoletti E."/>
        </authorList>
    </citation>
    <scope>NUCLEOTIDE SEQUENCE [LARGE SCALE GENOMIC DNA]</scope>
</reference>
<dbReference type="EMBL" id="M35027">
    <property type="protein sequence ID" value="AAA48024.1"/>
    <property type="molecule type" value="Genomic_DNA"/>
</dbReference>
<dbReference type="PIR" id="D42507">
    <property type="entry name" value="D42507"/>
</dbReference>
<dbReference type="SMR" id="P21017"/>
<dbReference type="Proteomes" id="UP000008269">
    <property type="component" value="Segment"/>
</dbReference>
<dbReference type="InterPro" id="IPR008726">
    <property type="entry name" value="Poxvirus_F8"/>
</dbReference>
<dbReference type="Pfam" id="PF05886">
    <property type="entry name" value="Orthopox_F8"/>
    <property type="match status" value="1"/>
</dbReference>
<comment type="induction">
    <text evidence="1">Expressed in the early phase of the viral replicative cycle.</text>
</comment>
<comment type="similarity">
    <text evidence="3">Belongs to the orthopoxvirus OPG052 family.</text>
</comment>
<evidence type="ECO:0000250" key="1">
    <source>
        <dbReference type="UniProtKB" id="P24360"/>
    </source>
</evidence>
<evidence type="ECO:0000256" key="2">
    <source>
        <dbReference type="SAM" id="MobiDB-lite"/>
    </source>
</evidence>
<evidence type="ECO:0000305" key="3"/>
<organism>
    <name type="scientific">Vaccinia virus (strain Copenhagen)</name>
    <name type="common">VACV</name>
    <dbReference type="NCBI Taxonomy" id="10249"/>
    <lineage>
        <taxon>Viruses</taxon>
        <taxon>Varidnaviria</taxon>
        <taxon>Bamfordvirae</taxon>
        <taxon>Nucleocytoviricota</taxon>
        <taxon>Pokkesviricetes</taxon>
        <taxon>Chitovirales</taxon>
        <taxon>Poxviridae</taxon>
        <taxon>Chordopoxvirinae</taxon>
        <taxon>Orthopoxvirus</taxon>
        <taxon>Vaccinia virus</taxon>
    </lineage>
</organism>
<name>PG052_VACCC</name>